<accession>Q6F1I4</accession>
<dbReference type="EC" id="5.4.99.25" evidence="1"/>
<dbReference type="EMBL" id="AE017263">
    <property type="protein sequence ID" value="AAT75639.1"/>
    <property type="molecule type" value="Genomic_DNA"/>
</dbReference>
<dbReference type="RefSeq" id="WP_011183179.1">
    <property type="nucleotide sequence ID" value="NC_006055.1"/>
</dbReference>
<dbReference type="RefSeq" id="YP_053523.1">
    <property type="nucleotide sequence ID" value="NC_006055.1"/>
</dbReference>
<dbReference type="SMR" id="Q6F1I4"/>
<dbReference type="STRING" id="265311.Mfl282"/>
<dbReference type="PaxDb" id="265311-Mfl282"/>
<dbReference type="EnsemblBacteria" id="AAT75639">
    <property type="protein sequence ID" value="AAT75639"/>
    <property type="gene ID" value="Mfl282"/>
</dbReference>
<dbReference type="GeneID" id="2897965"/>
<dbReference type="KEGG" id="mfl:Mfl282"/>
<dbReference type="PATRIC" id="fig|265311.5.peg.282"/>
<dbReference type="eggNOG" id="COG0130">
    <property type="taxonomic scope" value="Bacteria"/>
</dbReference>
<dbReference type="HOGENOM" id="CLU_032087_0_2_14"/>
<dbReference type="OrthoDB" id="9802309at2"/>
<dbReference type="Proteomes" id="UP000006647">
    <property type="component" value="Chromosome"/>
</dbReference>
<dbReference type="GO" id="GO:0003723">
    <property type="term" value="F:RNA binding"/>
    <property type="evidence" value="ECO:0007669"/>
    <property type="project" value="InterPro"/>
</dbReference>
<dbReference type="GO" id="GO:0160148">
    <property type="term" value="F:tRNA pseudouridine(55) synthase activity"/>
    <property type="evidence" value="ECO:0007669"/>
    <property type="project" value="UniProtKB-EC"/>
</dbReference>
<dbReference type="GO" id="GO:1990481">
    <property type="term" value="P:mRNA pseudouridine synthesis"/>
    <property type="evidence" value="ECO:0007669"/>
    <property type="project" value="TreeGrafter"/>
</dbReference>
<dbReference type="GO" id="GO:0031119">
    <property type="term" value="P:tRNA pseudouridine synthesis"/>
    <property type="evidence" value="ECO:0007669"/>
    <property type="project" value="UniProtKB-UniRule"/>
</dbReference>
<dbReference type="CDD" id="cd02573">
    <property type="entry name" value="PseudoU_synth_EcTruB"/>
    <property type="match status" value="1"/>
</dbReference>
<dbReference type="Gene3D" id="3.30.2350.10">
    <property type="entry name" value="Pseudouridine synthase"/>
    <property type="match status" value="1"/>
</dbReference>
<dbReference type="HAMAP" id="MF_01080">
    <property type="entry name" value="TruB_bact"/>
    <property type="match status" value="1"/>
</dbReference>
<dbReference type="InterPro" id="IPR020103">
    <property type="entry name" value="PsdUridine_synth_cat_dom_sf"/>
</dbReference>
<dbReference type="InterPro" id="IPR002501">
    <property type="entry name" value="PsdUridine_synth_N"/>
</dbReference>
<dbReference type="InterPro" id="IPR014780">
    <property type="entry name" value="tRNA_psdUridine_synth_TruB"/>
</dbReference>
<dbReference type="NCBIfam" id="TIGR00431">
    <property type="entry name" value="TruB"/>
    <property type="match status" value="1"/>
</dbReference>
<dbReference type="PANTHER" id="PTHR13767:SF2">
    <property type="entry name" value="PSEUDOURIDYLATE SYNTHASE TRUB1"/>
    <property type="match status" value="1"/>
</dbReference>
<dbReference type="PANTHER" id="PTHR13767">
    <property type="entry name" value="TRNA-PSEUDOURIDINE SYNTHASE"/>
    <property type="match status" value="1"/>
</dbReference>
<dbReference type="Pfam" id="PF01509">
    <property type="entry name" value="TruB_N"/>
    <property type="match status" value="1"/>
</dbReference>
<dbReference type="SUPFAM" id="SSF55120">
    <property type="entry name" value="Pseudouridine synthase"/>
    <property type="match status" value="1"/>
</dbReference>
<name>TRUB_MESFL</name>
<gene>
    <name evidence="1" type="primary">truB</name>
    <name type="ordered locus">Mfl282</name>
</gene>
<evidence type="ECO:0000255" key="1">
    <source>
        <dbReference type="HAMAP-Rule" id="MF_01080"/>
    </source>
</evidence>
<organism>
    <name type="scientific">Mesoplasma florum (strain ATCC 33453 / NBRC 100688 / NCTC 11704 / L1)</name>
    <name type="common">Acholeplasma florum</name>
    <dbReference type="NCBI Taxonomy" id="265311"/>
    <lineage>
        <taxon>Bacteria</taxon>
        <taxon>Bacillati</taxon>
        <taxon>Mycoplasmatota</taxon>
        <taxon>Mollicutes</taxon>
        <taxon>Entomoplasmatales</taxon>
        <taxon>Entomoplasmataceae</taxon>
        <taxon>Mesoplasma</taxon>
    </lineage>
</organism>
<reference key="1">
    <citation type="submission" date="2004-06" db="EMBL/GenBank/DDBJ databases">
        <authorList>
            <person name="Birren B.W."/>
            <person name="Stange-Thomann N."/>
            <person name="Hafez N."/>
            <person name="DeCaprio D."/>
            <person name="Fisher S."/>
            <person name="Butler J."/>
            <person name="Elkins T."/>
            <person name="Kodira C.D."/>
            <person name="Major J."/>
            <person name="Wang S."/>
            <person name="Nicol R."/>
            <person name="Nusbaum C."/>
        </authorList>
    </citation>
    <scope>NUCLEOTIDE SEQUENCE [LARGE SCALE GENOMIC DNA]</scope>
    <source>
        <strain>ATCC 33453 / NBRC 100688 / NCTC 11704 / L1</strain>
    </source>
</reference>
<proteinExistence type="inferred from homology"/>
<keyword id="KW-0413">Isomerase</keyword>
<keyword id="KW-1185">Reference proteome</keyword>
<keyword id="KW-0819">tRNA processing</keyword>
<feature type="chain" id="PRO_0000121861" description="tRNA pseudouridine synthase B">
    <location>
        <begin position="1"/>
        <end position="286"/>
    </location>
</feature>
<feature type="active site" description="Nucleophile" evidence="1">
    <location>
        <position position="40"/>
    </location>
</feature>
<protein>
    <recommendedName>
        <fullName evidence="1">tRNA pseudouridine synthase B</fullName>
        <ecNumber evidence="1">5.4.99.25</ecNumber>
    </recommendedName>
    <alternativeName>
        <fullName evidence="1">tRNA pseudouridine(55) synthase</fullName>
        <shortName evidence="1">Psi55 synthase</shortName>
    </alternativeName>
    <alternativeName>
        <fullName evidence="1">tRNA pseudouridylate synthase</fullName>
    </alternativeName>
    <alternativeName>
        <fullName evidence="1">tRNA-uridine isomerase</fullName>
    </alternativeName>
</protein>
<comment type="function">
    <text evidence="1">Responsible for synthesis of pseudouridine from uracil-55 in the psi GC loop of transfer RNAs.</text>
</comment>
<comment type="catalytic activity">
    <reaction evidence="1">
        <text>uridine(55) in tRNA = pseudouridine(55) in tRNA</text>
        <dbReference type="Rhea" id="RHEA:42532"/>
        <dbReference type="Rhea" id="RHEA-COMP:10101"/>
        <dbReference type="Rhea" id="RHEA-COMP:10102"/>
        <dbReference type="ChEBI" id="CHEBI:65314"/>
        <dbReference type="ChEBI" id="CHEBI:65315"/>
        <dbReference type="EC" id="5.4.99.25"/>
    </reaction>
</comment>
<comment type="similarity">
    <text evidence="1">Belongs to the pseudouridine synthase TruB family. Type 1 subfamily.</text>
</comment>
<sequence length="286" mass="32451">MNKSGIIILNKPKGLTTNHLIQKLKRKLNVKKIGHAGTLDPLATGVVICLINNGTKLSDYFLNENKAYEVTMKLFQATDTYDSDGSIIEEQEPFKIEQEQVEKVIAKFNGLAYEQEPPMYSAIKIDGKKLYEYARENQVVKVNKRLIKINSLSLDKYENNEISMTVYCSKGTYIRSLIVDIAKELNTIAHVTSLNRIESGNFIIKNSVNIENCEESNLIKMFDAIKMADYEIVELDDTLNVEHGKKIEVIAEKNIVFISNKSKELIACYERENGNVFKCKRGGLNI</sequence>